<reference key="1">
    <citation type="journal article" date="2005" name="Nucleic Acids Res.">
        <title>Genome dynamics and diversity of Shigella species, the etiologic agents of bacillary dysentery.</title>
        <authorList>
            <person name="Yang F."/>
            <person name="Yang J."/>
            <person name="Zhang X."/>
            <person name="Chen L."/>
            <person name="Jiang Y."/>
            <person name="Yan Y."/>
            <person name="Tang X."/>
            <person name="Wang J."/>
            <person name="Xiong Z."/>
            <person name="Dong J."/>
            <person name="Xue Y."/>
            <person name="Zhu Y."/>
            <person name="Xu X."/>
            <person name="Sun L."/>
            <person name="Chen S."/>
            <person name="Nie H."/>
            <person name="Peng J."/>
            <person name="Xu J."/>
            <person name="Wang Y."/>
            <person name="Yuan Z."/>
            <person name="Wen Y."/>
            <person name="Yao Z."/>
            <person name="Shen Y."/>
            <person name="Qiang B."/>
            <person name="Hou Y."/>
            <person name="Yu J."/>
            <person name="Jin Q."/>
        </authorList>
    </citation>
    <scope>NUCLEOTIDE SEQUENCE [LARGE SCALE GENOMIC DNA]</scope>
    <source>
        <strain>Sb227</strain>
    </source>
</reference>
<feature type="chain" id="PRO_0000063162" description="Purine nucleoside phosphorylase DeoD-type">
    <location>
        <begin position="1"/>
        <end position="239"/>
    </location>
</feature>
<feature type="active site" description="Proton donor" evidence="2">
    <location>
        <position position="205"/>
    </location>
</feature>
<feature type="binding site" evidence="1">
    <location>
        <position position="5"/>
    </location>
    <ligand>
        <name>a purine D-ribonucleoside</name>
        <dbReference type="ChEBI" id="CHEBI:142355"/>
        <note>ligand shared between dimeric partners</note>
    </ligand>
</feature>
<feature type="binding site" description="in other chain" evidence="1">
    <location>
        <position position="21"/>
    </location>
    <ligand>
        <name>phosphate</name>
        <dbReference type="ChEBI" id="CHEBI:43474"/>
        <note>ligand shared between dimeric partners</note>
    </ligand>
</feature>
<feature type="binding site" description="in other chain" evidence="1">
    <location>
        <position position="25"/>
    </location>
    <ligand>
        <name>phosphate</name>
        <dbReference type="ChEBI" id="CHEBI:43474"/>
        <note>ligand shared between dimeric partners</note>
    </ligand>
</feature>
<feature type="binding site" evidence="1">
    <location>
        <position position="44"/>
    </location>
    <ligand>
        <name>phosphate</name>
        <dbReference type="ChEBI" id="CHEBI:43474"/>
        <note>ligand shared between dimeric partners</note>
    </ligand>
</feature>
<feature type="binding site" description="in other chain" evidence="1">
    <location>
        <begin position="88"/>
        <end position="91"/>
    </location>
    <ligand>
        <name>phosphate</name>
        <dbReference type="ChEBI" id="CHEBI:43474"/>
        <note>ligand shared between dimeric partners</note>
    </ligand>
</feature>
<feature type="binding site" description="in other chain" evidence="1">
    <location>
        <begin position="180"/>
        <end position="182"/>
    </location>
    <ligand>
        <name>a purine D-ribonucleoside</name>
        <dbReference type="ChEBI" id="CHEBI:142355"/>
        <note>ligand shared between dimeric partners</note>
    </ligand>
</feature>
<feature type="binding site" description="in other chain" evidence="1">
    <location>
        <begin position="204"/>
        <end position="205"/>
    </location>
    <ligand>
        <name>a purine D-ribonucleoside</name>
        <dbReference type="ChEBI" id="CHEBI:142355"/>
        <note>ligand shared between dimeric partners</note>
    </ligand>
</feature>
<feature type="site" description="Important for catalytic activity" evidence="2">
    <location>
        <position position="218"/>
    </location>
</feature>
<feature type="modified residue" description="N6-acetyllysine" evidence="2">
    <location>
        <position position="27"/>
    </location>
</feature>
<name>DEOD_SHIBS</name>
<proteinExistence type="inferred from homology"/>
<dbReference type="EC" id="2.4.2.1" evidence="2"/>
<dbReference type="EMBL" id="CP000036">
    <property type="protein sequence ID" value="ABB68853.1"/>
    <property type="molecule type" value="Genomic_DNA"/>
</dbReference>
<dbReference type="RefSeq" id="WP_000224877.1">
    <property type="nucleotide sequence ID" value="NC_007613.1"/>
</dbReference>
<dbReference type="SMR" id="Q31SV5"/>
<dbReference type="GeneID" id="93777460"/>
<dbReference type="KEGG" id="sbo:SBO_4446"/>
<dbReference type="HOGENOM" id="CLU_068457_2_0_6"/>
<dbReference type="Proteomes" id="UP000007067">
    <property type="component" value="Chromosome"/>
</dbReference>
<dbReference type="GO" id="GO:0005829">
    <property type="term" value="C:cytosol"/>
    <property type="evidence" value="ECO:0007669"/>
    <property type="project" value="TreeGrafter"/>
</dbReference>
<dbReference type="GO" id="GO:0004731">
    <property type="term" value="F:purine-nucleoside phosphorylase activity"/>
    <property type="evidence" value="ECO:0007669"/>
    <property type="project" value="UniProtKB-UniRule"/>
</dbReference>
<dbReference type="GO" id="GO:0006152">
    <property type="term" value="P:purine nucleoside catabolic process"/>
    <property type="evidence" value="ECO:0007669"/>
    <property type="project" value="TreeGrafter"/>
</dbReference>
<dbReference type="CDD" id="cd09006">
    <property type="entry name" value="PNP_EcPNPI-like"/>
    <property type="match status" value="1"/>
</dbReference>
<dbReference type="FunFam" id="3.40.50.1580:FF:000002">
    <property type="entry name" value="Purine nucleoside phosphorylase DeoD-type"/>
    <property type="match status" value="1"/>
</dbReference>
<dbReference type="Gene3D" id="3.40.50.1580">
    <property type="entry name" value="Nucleoside phosphorylase domain"/>
    <property type="match status" value="1"/>
</dbReference>
<dbReference type="HAMAP" id="MF_01627">
    <property type="entry name" value="Pur_nucleosid_phosp"/>
    <property type="match status" value="1"/>
</dbReference>
<dbReference type="InterPro" id="IPR004402">
    <property type="entry name" value="DeoD-type"/>
</dbReference>
<dbReference type="InterPro" id="IPR018016">
    <property type="entry name" value="Nucleoside_phosphorylase_CS"/>
</dbReference>
<dbReference type="InterPro" id="IPR000845">
    <property type="entry name" value="Nucleoside_phosphorylase_d"/>
</dbReference>
<dbReference type="InterPro" id="IPR035994">
    <property type="entry name" value="Nucleoside_phosphorylase_sf"/>
</dbReference>
<dbReference type="NCBIfam" id="TIGR00107">
    <property type="entry name" value="deoD"/>
    <property type="match status" value="1"/>
</dbReference>
<dbReference type="NCBIfam" id="NF004489">
    <property type="entry name" value="PRK05819.1"/>
    <property type="match status" value="1"/>
</dbReference>
<dbReference type="NCBIfam" id="NF009914">
    <property type="entry name" value="PRK13374.1"/>
    <property type="match status" value="1"/>
</dbReference>
<dbReference type="PANTHER" id="PTHR43691:SF2">
    <property type="entry name" value="PURINE NUCLEOSIDE PHOSPHORYLASE DEOD-TYPE"/>
    <property type="match status" value="1"/>
</dbReference>
<dbReference type="PANTHER" id="PTHR43691">
    <property type="entry name" value="URIDINE PHOSPHORYLASE"/>
    <property type="match status" value="1"/>
</dbReference>
<dbReference type="Pfam" id="PF01048">
    <property type="entry name" value="PNP_UDP_1"/>
    <property type="match status" value="1"/>
</dbReference>
<dbReference type="SUPFAM" id="SSF53167">
    <property type="entry name" value="Purine and uridine phosphorylases"/>
    <property type="match status" value="1"/>
</dbReference>
<dbReference type="PROSITE" id="PS01232">
    <property type="entry name" value="PNP_UDP_1"/>
    <property type="match status" value="1"/>
</dbReference>
<evidence type="ECO:0000250" key="1">
    <source>
        <dbReference type="UniProtKB" id="P50389"/>
    </source>
</evidence>
<evidence type="ECO:0000255" key="2">
    <source>
        <dbReference type="HAMAP-Rule" id="MF_01627"/>
    </source>
</evidence>
<organism>
    <name type="scientific">Shigella boydii serotype 4 (strain Sb227)</name>
    <dbReference type="NCBI Taxonomy" id="300268"/>
    <lineage>
        <taxon>Bacteria</taxon>
        <taxon>Pseudomonadati</taxon>
        <taxon>Pseudomonadota</taxon>
        <taxon>Gammaproteobacteria</taxon>
        <taxon>Enterobacterales</taxon>
        <taxon>Enterobacteriaceae</taxon>
        <taxon>Shigella</taxon>
    </lineage>
</organism>
<protein>
    <recommendedName>
        <fullName evidence="2">Purine nucleoside phosphorylase DeoD-type</fullName>
        <shortName evidence="2">PNP</shortName>
        <ecNumber evidence="2">2.4.2.1</ecNumber>
    </recommendedName>
</protein>
<keyword id="KW-0007">Acetylation</keyword>
<keyword id="KW-0328">Glycosyltransferase</keyword>
<keyword id="KW-0808">Transferase</keyword>
<accession>Q31SV5</accession>
<comment type="function">
    <text evidence="2">Catalyzes the reversible phosphorolytic breakdown of the N-glycosidic bond in the beta-(deoxy)ribonucleoside molecules, with the formation of the corresponding free purine bases and pentose-1-phosphate.</text>
</comment>
<comment type="catalytic activity">
    <reaction evidence="2">
        <text>a purine D-ribonucleoside + phosphate = a purine nucleobase + alpha-D-ribose 1-phosphate</text>
        <dbReference type="Rhea" id="RHEA:19805"/>
        <dbReference type="ChEBI" id="CHEBI:26386"/>
        <dbReference type="ChEBI" id="CHEBI:43474"/>
        <dbReference type="ChEBI" id="CHEBI:57720"/>
        <dbReference type="ChEBI" id="CHEBI:142355"/>
        <dbReference type="EC" id="2.4.2.1"/>
    </reaction>
</comment>
<comment type="catalytic activity">
    <reaction evidence="2">
        <text>a purine 2'-deoxy-D-ribonucleoside + phosphate = a purine nucleobase + 2-deoxy-alpha-D-ribose 1-phosphate</text>
        <dbReference type="Rhea" id="RHEA:36431"/>
        <dbReference type="ChEBI" id="CHEBI:26386"/>
        <dbReference type="ChEBI" id="CHEBI:43474"/>
        <dbReference type="ChEBI" id="CHEBI:57259"/>
        <dbReference type="ChEBI" id="CHEBI:142361"/>
        <dbReference type="EC" id="2.4.2.1"/>
    </reaction>
</comment>
<comment type="subunit">
    <text evidence="2">Homohexamer; trimer of homodimers.</text>
</comment>
<comment type="similarity">
    <text evidence="2">Belongs to the PNP/UDP phosphorylase family.</text>
</comment>
<sequence length="239" mass="25950">MATPHINAEMGDFADVVLMPGDPLRAKYIAETFLEDAREVNNVRGMLGFTGTYKGRKISVMGHGMGIPSCSIYTKELITDFGVKKIIRVGSCGAVLPHVKLRDVVIGMGACTDSKVNRIRFKDHDFAAIADFDMVRNAVDAAKALGIDARVGNLFSADLFYSPDGEMFDVMEKYGILGVEMEAAGIYGVAAEFGAKALTICTVSDHIRTHEQTTAAERQTTFNDMIKIALESVLLGDKE</sequence>
<gene>
    <name evidence="2" type="primary">deoD</name>
    <name type="ordered locus">SBO_4446</name>
</gene>